<keyword id="KW-1003">Cell membrane</keyword>
<keyword id="KW-0407">Ion channel</keyword>
<keyword id="KW-0406">Ion transport</keyword>
<keyword id="KW-0472">Membrane</keyword>
<keyword id="KW-0479">Metal-binding</keyword>
<keyword id="KW-1185">Reference proteome</keyword>
<keyword id="KW-0915">Sodium</keyword>
<keyword id="KW-0812">Transmembrane</keyword>
<keyword id="KW-1133">Transmembrane helix</keyword>
<keyword id="KW-0813">Transport</keyword>
<proteinExistence type="inferred from homology"/>
<feature type="chain" id="PRO_0000110197" description="Fluoride-specific ion channel FluC 2">
    <location>
        <begin position="1"/>
        <end position="124"/>
    </location>
</feature>
<feature type="transmembrane region" description="Helical" evidence="1">
    <location>
        <begin position="9"/>
        <end position="29"/>
    </location>
</feature>
<feature type="transmembrane region" description="Helical" evidence="1">
    <location>
        <begin position="34"/>
        <end position="54"/>
    </location>
</feature>
<feature type="transmembrane region" description="Helical" evidence="1">
    <location>
        <begin position="67"/>
        <end position="87"/>
    </location>
</feature>
<feature type="transmembrane region" description="Helical" evidence="1">
    <location>
        <begin position="99"/>
        <end position="119"/>
    </location>
</feature>
<feature type="binding site" evidence="1">
    <location>
        <position position="77"/>
    </location>
    <ligand>
        <name>Na(+)</name>
        <dbReference type="ChEBI" id="CHEBI:29101"/>
        <note>structural</note>
    </ligand>
</feature>
<feature type="binding site" evidence="1">
    <location>
        <position position="80"/>
    </location>
    <ligand>
        <name>Na(+)</name>
        <dbReference type="ChEBI" id="CHEBI:29101"/>
        <note>structural</note>
    </ligand>
</feature>
<reference key="1">
    <citation type="journal article" date="2001" name="J. Bacteriol.">
        <title>Genome of the bacterium Streptococcus pneumoniae strain R6.</title>
        <authorList>
            <person name="Hoskins J."/>
            <person name="Alborn W.E. Jr."/>
            <person name="Arnold J."/>
            <person name="Blaszczak L.C."/>
            <person name="Burgett S."/>
            <person name="DeHoff B.S."/>
            <person name="Estrem S.T."/>
            <person name="Fritz L."/>
            <person name="Fu D.-J."/>
            <person name="Fuller W."/>
            <person name="Geringer C."/>
            <person name="Gilmour R."/>
            <person name="Glass J.S."/>
            <person name="Khoja H."/>
            <person name="Kraft A.R."/>
            <person name="Lagace R.E."/>
            <person name="LeBlanc D.J."/>
            <person name="Lee L.N."/>
            <person name="Lefkowitz E.J."/>
            <person name="Lu J."/>
            <person name="Matsushima P."/>
            <person name="McAhren S.M."/>
            <person name="McHenney M."/>
            <person name="McLeaster K."/>
            <person name="Mundy C.W."/>
            <person name="Nicas T.I."/>
            <person name="Norris F.H."/>
            <person name="O'Gara M."/>
            <person name="Peery R.B."/>
            <person name="Robertson G.T."/>
            <person name="Rockey P."/>
            <person name="Sun P.-M."/>
            <person name="Winkler M.E."/>
            <person name="Yang Y."/>
            <person name="Young-Bellido M."/>
            <person name="Zhao G."/>
            <person name="Zook C.A."/>
            <person name="Baltz R.H."/>
            <person name="Jaskunas S.R."/>
            <person name="Rosteck P.R. Jr."/>
            <person name="Skatrud P.L."/>
            <person name="Glass J.I."/>
        </authorList>
    </citation>
    <scope>NUCLEOTIDE SEQUENCE [LARGE SCALE GENOMIC DNA]</scope>
    <source>
        <strain>ATCC BAA-255 / R6</strain>
    </source>
</reference>
<name>FLUC2_STRR6</name>
<evidence type="ECO:0000255" key="1">
    <source>
        <dbReference type="HAMAP-Rule" id="MF_00454"/>
    </source>
</evidence>
<gene>
    <name evidence="1" type="primary">fluC2</name>
    <name evidence="1" type="synonym">crcB2</name>
    <name type="ordered locus">spr1173</name>
</gene>
<sequence>MKKEQFYPLGIFLAAMLGGLVRYLVSTWLPASPDFPWGTLFVNYLGIFCLIFLVKGYLVYKGTSKGLILALGTGFCGGLTTFSSLMLDTVKLLDTGRYFSLVLYLLLSIGGGLLLAYFLGRKKW</sequence>
<accession>Q8DPG6</accession>
<organism>
    <name type="scientific">Streptococcus pneumoniae (strain ATCC BAA-255 / R6)</name>
    <dbReference type="NCBI Taxonomy" id="171101"/>
    <lineage>
        <taxon>Bacteria</taxon>
        <taxon>Bacillati</taxon>
        <taxon>Bacillota</taxon>
        <taxon>Bacilli</taxon>
        <taxon>Lactobacillales</taxon>
        <taxon>Streptococcaceae</taxon>
        <taxon>Streptococcus</taxon>
    </lineage>
</organism>
<dbReference type="EMBL" id="AE007317">
    <property type="protein sequence ID" value="AAK99976.1"/>
    <property type="molecule type" value="Genomic_DNA"/>
</dbReference>
<dbReference type="PIR" id="D98018">
    <property type="entry name" value="D98018"/>
</dbReference>
<dbReference type="RefSeq" id="NP_358766.1">
    <property type="nucleotide sequence ID" value="NC_003098.1"/>
</dbReference>
<dbReference type="SMR" id="Q8DPG6"/>
<dbReference type="STRING" id="171101.spr1173"/>
<dbReference type="KEGG" id="spr:spr1173"/>
<dbReference type="PATRIC" id="fig|171101.6.peg.1271"/>
<dbReference type="eggNOG" id="COG0239">
    <property type="taxonomic scope" value="Bacteria"/>
</dbReference>
<dbReference type="HOGENOM" id="CLU_114342_3_3_9"/>
<dbReference type="Proteomes" id="UP000000586">
    <property type="component" value="Chromosome"/>
</dbReference>
<dbReference type="GO" id="GO:0005886">
    <property type="term" value="C:plasma membrane"/>
    <property type="evidence" value="ECO:0000318"/>
    <property type="project" value="GO_Central"/>
</dbReference>
<dbReference type="GO" id="GO:0062054">
    <property type="term" value="F:fluoride channel activity"/>
    <property type="evidence" value="ECO:0007669"/>
    <property type="project" value="UniProtKB-UniRule"/>
</dbReference>
<dbReference type="GO" id="GO:1903425">
    <property type="term" value="F:fluoride transmembrane transporter activity"/>
    <property type="evidence" value="ECO:0000318"/>
    <property type="project" value="GO_Central"/>
</dbReference>
<dbReference type="GO" id="GO:0046872">
    <property type="term" value="F:metal ion binding"/>
    <property type="evidence" value="ECO:0007669"/>
    <property type="project" value="UniProtKB-KW"/>
</dbReference>
<dbReference type="GO" id="GO:0140114">
    <property type="term" value="P:cellular detoxification of fluoride"/>
    <property type="evidence" value="ECO:0007669"/>
    <property type="project" value="UniProtKB-UniRule"/>
</dbReference>
<dbReference type="GO" id="GO:1903424">
    <property type="term" value="P:fluoride transmembrane transport"/>
    <property type="evidence" value="ECO:0000318"/>
    <property type="project" value="GO_Central"/>
</dbReference>
<dbReference type="HAMAP" id="MF_00454">
    <property type="entry name" value="FluC"/>
    <property type="match status" value="1"/>
</dbReference>
<dbReference type="InterPro" id="IPR003691">
    <property type="entry name" value="FluC"/>
</dbReference>
<dbReference type="NCBIfam" id="NF010817">
    <property type="entry name" value="PRK14221.1"/>
    <property type="match status" value="1"/>
</dbReference>
<dbReference type="PANTHER" id="PTHR28259">
    <property type="entry name" value="FLUORIDE EXPORT PROTEIN 1-RELATED"/>
    <property type="match status" value="1"/>
</dbReference>
<dbReference type="PANTHER" id="PTHR28259:SF1">
    <property type="entry name" value="FLUORIDE EXPORT PROTEIN 1-RELATED"/>
    <property type="match status" value="1"/>
</dbReference>
<dbReference type="Pfam" id="PF02537">
    <property type="entry name" value="CRCB"/>
    <property type="match status" value="1"/>
</dbReference>
<protein>
    <recommendedName>
        <fullName evidence="1">Fluoride-specific ion channel FluC 2</fullName>
    </recommendedName>
</protein>
<comment type="function">
    <text evidence="1">Fluoride-specific ion channel. Important for reducing fluoride concentration in the cell, thus reducing its toxicity.</text>
</comment>
<comment type="catalytic activity">
    <reaction evidence="1">
        <text>fluoride(in) = fluoride(out)</text>
        <dbReference type="Rhea" id="RHEA:76159"/>
        <dbReference type="ChEBI" id="CHEBI:17051"/>
    </reaction>
    <physiologicalReaction direction="left-to-right" evidence="1">
        <dbReference type="Rhea" id="RHEA:76160"/>
    </physiologicalReaction>
</comment>
<comment type="activity regulation">
    <text evidence="1">Na(+) is not transported, but it plays an essential structural role and its presence is essential for fluoride channel function.</text>
</comment>
<comment type="subcellular location">
    <subcellularLocation>
        <location evidence="1">Cell membrane</location>
        <topology evidence="1">Multi-pass membrane protein</topology>
    </subcellularLocation>
</comment>
<comment type="similarity">
    <text evidence="1">Belongs to the fluoride channel Fluc/FEX (TC 1.A.43) family.</text>
</comment>